<dbReference type="EC" id="1.1.1.25" evidence="1"/>
<dbReference type="EMBL" id="CP001139">
    <property type="protein sequence ID" value="ACH65075.1"/>
    <property type="molecule type" value="Genomic_DNA"/>
</dbReference>
<dbReference type="RefSeq" id="WP_012532807.1">
    <property type="nucleotide sequence ID" value="NC_011184.1"/>
</dbReference>
<dbReference type="SMR" id="B5FCV8"/>
<dbReference type="KEGG" id="vfm:VFMJ11_2666"/>
<dbReference type="HOGENOM" id="CLU_044063_2_1_6"/>
<dbReference type="UniPathway" id="UPA00053">
    <property type="reaction ID" value="UER00087"/>
</dbReference>
<dbReference type="Proteomes" id="UP000001857">
    <property type="component" value="Chromosome I"/>
</dbReference>
<dbReference type="GO" id="GO:0005829">
    <property type="term" value="C:cytosol"/>
    <property type="evidence" value="ECO:0007669"/>
    <property type="project" value="TreeGrafter"/>
</dbReference>
<dbReference type="GO" id="GO:0050661">
    <property type="term" value="F:NADP binding"/>
    <property type="evidence" value="ECO:0007669"/>
    <property type="project" value="InterPro"/>
</dbReference>
<dbReference type="GO" id="GO:0004764">
    <property type="term" value="F:shikimate 3-dehydrogenase (NADP+) activity"/>
    <property type="evidence" value="ECO:0007669"/>
    <property type="project" value="UniProtKB-UniRule"/>
</dbReference>
<dbReference type="GO" id="GO:0008652">
    <property type="term" value="P:amino acid biosynthetic process"/>
    <property type="evidence" value="ECO:0007669"/>
    <property type="project" value="UniProtKB-KW"/>
</dbReference>
<dbReference type="GO" id="GO:0009073">
    <property type="term" value="P:aromatic amino acid family biosynthetic process"/>
    <property type="evidence" value="ECO:0007669"/>
    <property type="project" value="UniProtKB-KW"/>
</dbReference>
<dbReference type="GO" id="GO:0009423">
    <property type="term" value="P:chorismate biosynthetic process"/>
    <property type="evidence" value="ECO:0007669"/>
    <property type="project" value="UniProtKB-UniRule"/>
</dbReference>
<dbReference type="GO" id="GO:0019632">
    <property type="term" value="P:shikimate metabolic process"/>
    <property type="evidence" value="ECO:0007669"/>
    <property type="project" value="InterPro"/>
</dbReference>
<dbReference type="CDD" id="cd01065">
    <property type="entry name" value="NAD_bind_Shikimate_DH"/>
    <property type="match status" value="1"/>
</dbReference>
<dbReference type="FunFam" id="3.40.50.10860:FF:000006">
    <property type="entry name" value="Shikimate dehydrogenase (NADP(+))"/>
    <property type="match status" value="1"/>
</dbReference>
<dbReference type="FunFam" id="3.40.50.720:FF:000104">
    <property type="entry name" value="Shikimate dehydrogenase (NADP(+))"/>
    <property type="match status" value="1"/>
</dbReference>
<dbReference type="Gene3D" id="3.40.50.10860">
    <property type="entry name" value="Leucine Dehydrogenase, chain A, domain 1"/>
    <property type="match status" value="1"/>
</dbReference>
<dbReference type="Gene3D" id="3.40.50.720">
    <property type="entry name" value="NAD(P)-binding Rossmann-like Domain"/>
    <property type="match status" value="1"/>
</dbReference>
<dbReference type="HAMAP" id="MF_00222">
    <property type="entry name" value="Shikimate_DH_AroE"/>
    <property type="match status" value="1"/>
</dbReference>
<dbReference type="InterPro" id="IPR046346">
    <property type="entry name" value="Aminoacid_DH-like_N_sf"/>
</dbReference>
<dbReference type="InterPro" id="IPR036291">
    <property type="entry name" value="NAD(P)-bd_dom_sf"/>
</dbReference>
<dbReference type="InterPro" id="IPR041121">
    <property type="entry name" value="SDH_C"/>
</dbReference>
<dbReference type="InterPro" id="IPR011342">
    <property type="entry name" value="Shikimate_DH"/>
</dbReference>
<dbReference type="InterPro" id="IPR013708">
    <property type="entry name" value="Shikimate_DH-bd_N"/>
</dbReference>
<dbReference type="InterPro" id="IPR022893">
    <property type="entry name" value="Shikimate_DH_fam"/>
</dbReference>
<dbReference type="InterPro" id="IPR006151">
    <property type="entry name" value="Shikm_DH/Glu-tRNA_Rdtase"/>
</dbReference>
<dbReference type="NCBIfam" id="TIGR00507">
    <property type="entry name" value="aroE"/>
    <property type="match status" value="1"/>
</dbReference>
<dbReference type="NCBIfam" id="NF001310">
    <property type="entry name" value="PRK00258.1-2"/>
    <property type="match status" value="1"/>
</dbReference>
<dbReference type="PANTHER" id="PTHR21089:SF1">
    <property type="entry name" value="BIFUNCTIONAL 3-DEHYDROQUINATE DEHYDRATASE_SHIKIMATE DEHYDROGENASE, CHLOROPLASTIC"/>
    <property type="match status" value="1"/>
</dbReference>
<dbReference type="PANTHER" id="PTHR21089">
    <property type="entry name" value="SHIKIMATE DEHYDROGENASE"/>
    <property type="match status" value="1"/>
</dbReference>
<dbReference type="Pfam" id="PF18317">
    <property type="entry name" value="SDH_C"/>
    <property type="match status" value="1"/>
</dbReference>
<dbReference type="Pfam" id="PF01488">
    <property type="entry name" value="Shikimate_DH"/>
    <property type="match status" value="1"/>
</dbReference>
<dbReference type="Pfam" id="PF08501">
    <property type="entry name" value="Shikimate_dh_N"/>
    <property type="match status" value="1"/>
</dbReference>
<dbReference type="SUPFAM" id="SSF53223">
    <property type="entry name" value="Aminoacid dehydrogenase-like, N-terminal domain"/>
    <property type="match status" value="1"/>
</dbReference>
<dbReference type="SUPFAM" id="SSF51735">
    <property type="entry name" value="NAD(P)-binding Rossmann-fold domains"/>
    <property type="match status" value="1"/>
</dbReference>
<organism>
    <name type="scientific">Aliivibrio fischeri (strain MJ11)</name>
    <name type="common">Vibrio fischeri</name>
    <dbReference type="NCBI Taxonomy" id="388396"/>
    <lineage>
        <taxon>Bacteria</taxon>
        <taxon>Pseudomonadati</taxon>
        <taxon>Pseudomonadota</taxon>
        <taxon>Gammaproteobacteria</taxon>
        <taxon>Vibrionales</taxon>
        <taxon>Vibrionaceae</taxon>
        <taxon>Aliivibrio</taxon>
    </lineage>
</organism>
<gene>
    <name evidence="1" type="primary">aroE</name>
    <name type="ordered locus">VFMJ11_2666</name>
</gene>
<accession>B5FCV8</accession>
<sequence>MDKYAVFGNPIKHSKSPFIHTLFARQTMQDLEYSAIEAPINGFVESVTAFFSQQGKGCNVTVPFKEEAFQFADQLTERAKLAGAVNTLKKLDDGIILGDNTDGEGLVQDLLQYQVPLEDKHILLIGAGGAARGVILPLLKQNPASITLVNRTYEKAKQLAELFSPYGRIEAKEMSDINKGFDVIINSTSASLSGELPQIDPVIFSGGAISYDMMYGSGKTIFNQWALENDAYQAYDGLGMLVGQAAESFTVWRGLRPGSKQILRELRKNLEGM</sequence>
<feature type="chain" id="PRO_1000100151" description="Shikimate dehydrogenase (NADP(+))">
    <location>
        <begin position="1"/>
        <end position="273"/>
    </location>
</feature>
<feature type="active site" description="Proton acceptor" evidence="1">
    <location>
        <position position="65"/>
    </location>
</feature>
<feature type="binding site" evidence="1">
    <location>
        <begin position="14"/>
        <end position="16"/>
    </location>
    <ligand>
        <name>shikimate</name>
        <dbReference type="ChEBI" id="CHEBI:36208"/>
    </ligand>
</feature>
<feature type="binding site" evidence="1">
    <location>
        <position position="61"/>
    </location>
    <ligand>
        <name>shikimate</name>
        <dbReference type="ChEBI" id="CHEBI:36208"/>
    </ligand>
</feature>
<feature type="binding site" evidence="1">
    <location>
        <position position="77"/>
    </location>
    <ligand>
        <name>NADP(+)</name>
        <dbReference type="ChEBI" id="CHEBI:58349"/>
    </ligand>
</feature>
<feature type="binding site" evidence="1">
    <location>
        <position position="86"/>
    </location>
    <ligand>
        <name>shikimate</name>
        <dbReference type="ChEBI" id="CHEBI:36208"/>
    </ligand>
</feature>
<feature type="binding site" evidence="1">
    <location>
        <position position="102"/>
    </location>
    <ligand>
        <name>shikimate</name>
        <dbReference type="ChEBI" id="CHEBI:36208"/>
    </ligand>
</feature>
<feature type="binding site" evidence="1">
    <location>
        <begin position="126"/>
        <end position="130"/>
    </location>
    <ligand>
        <name>NADP(+)</name>
        <dbReference type="ChEBI" id="CHEBI:58349"/>
    </ligand>
</feature>
<feature type="binding site" evidence="1">
    <location>
        <begin position="150"/>
        <end position="155"/>
    </location>
    <ligand>
        <name>NADP(+)</name>
        <dbReference type="ChEBI" id="CHEBI:58349"/>
    </ligand>
</feature>
<feature type="binding site" evidence="1">
    <location>
        <position position="213"/>
    </location>
    <ligand>
        <name>NADP(+)</name>
        <dbReference type="ChEBI" id="CHEBI:58349"/>
    </ligand>
</feature>
<feature type="binding site" evidence="1">
    <location>
        <position position="215"/>
    </location>
    <ligand>
        <name>shikimate</name>
        <dbReference type="ChEBI" id="CHEBI:36208"/>
    </ligand>
</feature>
<feature type="binding site" evidence="1">
    <location>
        <position position="237"/>
    </location>
    <ligand>
        <name>NADP(+)</name>
        <dbReference type="ChEBI" id="CHEBI:58349"/>
    </ligand>
</feature>
<protein>
    <recommendedName>
        <fullName evidence="1">Shikimate dehydrogenase (NADP(+))</fullName>
        <shortName evidence="1">SDH</shortName>
        <ecNumber evidence="1">1.1.1.25</ecNumber>
    </recommendedName>
</protein>
<proteinExistence type="inferred from homology"/>
<name>AROE_ALIFM</name>
<reference key="1">
    <citation type="submission" date="2008-08" db="EMBL/GenBank/DDBJ databases">
        <title>Complete sequence of Vibrio fischeri strain MJ11.</title>
        <authorList>
            <person name="Mandel M.J."/>
            <person name="Stabb E.V."/>
            <person name="Ruby E.G."/>
            <person name="Ferriera S."/>
            <person name="Johnson J."/>
            <person name="Kravitz S."/>
            <person name="Beeson K."/>
            <person name="Sutton G."/>
            <person name="Rogers Y.-H."/>
            <person name="Friedman R."/>
            <person name="Frazier M."/>
            <person name="Venter J.C."/>
        </authorList>
    </citation>
    <scope>NUCLEOTIDE SEQUENCE [LARGE SCALE GENOMIC DNA]</scope>
    <source>
        <strain>MJ11</strain>
    </source>
</reference>
<comment type="function">
    <text evidence="1">Involved in the biosynthesis of the chorismate, which leads to the biosynthesis of aromatic amino acids. Catalyzes the reversible NADPH linked reduction of 3-dehydroshikimate (DHSA) to yield shikimate (SA).</text>
</comment>
<comment type="catalytic activity">
    <reaction evidence="1">
        <text>shikimate + NADP(+) = 3-dehydroshikimate + NADPH + H(+)</text>
        <dbReference type="Rhea" id="RHEA:17737"/>
        <dbReference type="ChEBI" id="CHEBI:15378"/>
        <dbReference type="ChEBI" id="CHEBI:16630"/>
        <dbReference type="ChEBI" id="CHEBI:36208"/>
        <dbReference type="ChEBI" id="CHEBI:57783"/>
        <dbReference type="ChEBI" id="CHEBI:58349"/>
        <dbReference type="EC" id="1.1.1.25"/>
    </reaction>
</comment>
<comment type="pathway">
    <text evidence="1">Metabolic intermediate biosynthesis; chorismate biosynthesis; chorismate from D-erythrose 4-phosphate and phosphoenolpyruvate: step 4/7.</text>
</comment>
<comment type="subunit">
    <text evidence="1">Homodimer.</text>
</comment>
<comment type="similarity">
    <text evidence="1">Belongs to the shikimate dehydrogenase family.</text>
</comment>
<keyword id="KW-0028">Amino-acid biosynthesis</keyword>
<keyword id="KW-0057">Aromatic amino acid biosynthesis</keyword>
<keyword id="KW-0521">NADP</keyword>
<keyword id="KW-0560">Oxidoreductase</keyword>
<evidence type="ECO:0000255" key="1">
    <source>
        <dbReference type="HAMAP-Rule" id="MF_00222"/>
    </source>
</evidence>